<protein>
    <recommendedName>
        <fullName>Serine/threonine-protein kinase 3</fullName>
        <ecNumber>2.7.11.1</ecNumber>
    </recommendedName>
    <alternativeName>
        <fullName>Mammalian STE20-like protein kinase 2</fullName>
        <shortName>MST-2</shortName>
    </alternativeName>
    <alternativeName>
        <fullName>STE20-like kinase MST2</fullName>
    </alternativeName>
    <component>
        <recommendedName>
            <fullName>Serine/threonine-protein kinase 3 36kDa subunit</fullName>
            <shortName>MST2/N</shortName>
        </recommendedName>
    </component>
    <component>
        <recommendedName>
            <fullName>Serine/threonine-protein kinase 3 20kDa subunit</fullName>
            <shortName>MST2/C</shortName>
        </recommendedName>
    </component>
</protein>
<comment type="function">
    <text evidence="3 4 10">Stress-activated, pro-apoptotic kinase which, following caspase-cleavage, enters the nucleus and induces chromatin condensation followed by internucleosomal DNA fragmentation. Key component of the Hippo signaling pathway which plays a pivotal role in organ size control and tumor suppression by restricting proliferation and promoting apoptosis. The core of this pathway is composed of a kinase cascade wherein STK3/MST2 and STK4/MST1, in complex with its regulatory protein SAV1, phosphorylates and activates LATS1/2 in complex with its regulatory protein MOB1, which in turn phosphorylates and inactivates YAP1 oncoprotein and WWTR1/TAZ. Phosphorylation of YAP1 by LATS2 inhibits its translocation into the nucleus to regulate cellular genes important for cell proliferation, cell death, and cell migration. STK3/MST2 and STK4/MST1 are required to repress proliferation of mature hepatocytes, to prevent activation of facultative adult liver stem cells (oval cells), and to inhibit tumor formation (By similarity). Phosphorylates NKX2-1. Phosphorylates NEK2 and plays a role in centrosome disjunction by regulating the localization of NEK2 to centrosomes, and its ability to phosphorylate CROCC and CEP250. In conjunction with SAV1, activates the transcriptional activity of ESR1 through the modulation of its phosphorylation. Positively regulates RAF1 activation via suppression of the inhibitory phosphorylation of RAF1 on 'Ser-259'. Phosphorylates MOBKL1A and RASSF2. Phosphorylates MOBKL1B on 'Thr-74'. Acts cooperatively with MOBKL1B to activate STK38 (By similarity).</text>
</comment>
<comment type="catalytic activity">
    <reaction evidence="3">
        <text>L-seryl-[protein] + ATP = O-phospho-L-seryl-[protein] + ADP + H(+)</text>
        <dbReference type="Rhea" id="RHEA:17989"/>
        <dbReference type="Rhea" id="RHEA-COMP:9863"/>
        <dbReference type="Rhea" id="RHEA-COMP:11604"/>
        <dbReference type="ChEBI" id="CHEBI:15378"/>
        <dbReference type="ChEBI" id="CHEBI:29999"/>
        <dbReference type="ChEBI" id="CHEBI:30616"/>
        <dbReference type="ChEBI" id="CHEBI:83421"/>
        <dbReference type="ChEBI" id="CHEBI:456216"/>
        <dbReference type="EC" id="2.7.11.1"/>
    </reaction>
    <physiologicalReaction direction="left-to-right" evidence="3">
        <dbReference type="Rhea" id="RHEA:17990"/>
    </physiologicalReaction>
</comment>
<comment type="catalytic activity">
    <reaction evidence="3">
        <text>L-threonyl-[protein] + ATP = O-phospho-L-threonyl-[protein] + ADP + H(+)</text>
        <dbReference type="Rhea" id="RHEA:46608"/>
        <dbReference type="Rhea" id="RHEA-COMP:11060"/>
        <dbReference type="Rhea" id="RHEA-COMP:11605"/>
        <dbReference type="ChEBI" id="CHEBI:15378"/>
        <dbReference type="ChEBI" id="CHEBI:30013"/>
        <dbReference type="ChEBI" id="CHEBI:30616"/>
        <dbReference type="ChEBI" id="CHEBI:61977"/>
        <dbReference type="ChEBI" id="CHEBI:456216"/>
        <dbReference type="EC" id="2.7.11.1"/>
    </reaction>
    <physiologicalReaction direction="left-to-right" evidence="3">
        <dbReference type="Rhea" id="RHEA:46609"/>
    </physiologicalReaction>
</comment>
<comment type="cofactor">
    <cofactor evidence="3">
        <name>Mg(2+)</name>
        <dbReference type="ChEBI" id="CHEBI:18420"/>
    </cofactor>
</comment>
<comment type="activity regulation">
    <text evidence="3">Inhibited by the C-terminal non-catalytic region. Activated by caspase-cleavage. Full activation also requires homodimerization and autophosphorylation of Thr-180, which are inhibited by the proto-oncogene product RAF1. Activated by RASSF1 which acts by preventing its dephosphorylation. When autophosphorylated at Thr-180, recruits STRIPAK complex and promotes PP2A-mediated dephosphorylation and inactivation of STK3.</text>
</comment>
<comment type="subunit">
    <text evidence="2 3">Homodimer; mediated via the coiled-coil region. Interacts with NORE1, which inhibits autoactivation (By similarity). Interacts with and stabilizes SAV1. Interacts with RAF1, which prevents dimerization and phosphorylation. Interacts with RASSF1. Interacts (via SARAH domain) with isoform 1 of NEK2. Interacts with ESR1 only in the presence of SAV1. Interacts with PKB/AKT1. Forms a tripartite complex with MOBKL1B and STK38. Interacts with RASSF2 (via SARAH domain). Interacts with DLG5 (via PDZ domain 3). Interacts with LATS1; this interaction is inhibited in the presence of DLG5. Interacts with MARK3 in the presence of DLG5. Interacts with RASSF5; this interaction inhibits STK3 autoactivation through heterodimerization. Interacts (when phosphorylated) with SLMAP (via FHA domain); the interaction associates STK3 with the STRIPAK complex (By similarity).</text>
</comment>
<comment type="subcellular location">
    <subcellularLocation>
        <location evidence="3">Cytoplasm</location>
    </subcellularLocation>
    <subcellularLocation>
        <location evidence="3">Nucleus</location>
    </subcellularLocation>
    <text evidence="3">The caspase-cleaved form cycles between nucleus and cytoplasm (By similarity). Phosphorylation at Thr-117 leads to inhibition of nuclear translocation (By similarity).</text>
</comment>
<comment type="PTM">
    <text evidence="3">Autophosphorylated on two residues Thr-174 and Thr-180, leading to activation. Phosphorylation at Thr-117 and Thr-384 by PKB/AKT1, leads to inhibition of its: cleavage, kinase activity, autophosphorylation at Thr-180, binding to RASSF1 and nuclear translocation, and increase in its binding to RAF1. Phosphorylated at Ser-15 by PLK1, leading to activation.</text>
</comment>
<comment type="PTM">
    <text evidence="3">Proteolytically cleaved by caspase-3 during apoptosis. Proteolytic cleavage results in kinase activation and nuclear translocation of the truncated form (MST1/N) (By similarity).</text>
</comment>
<comment type="PTM">
    <text evidence="3">Ubiquitinated by TRIM69; leading to its redistribution to the perinuclear cytoskeleton.</text>
</comment>
<comment type="similarity">
    <text evidence="11">Belongs to the protein kinase superfamily. STE Ser/Thr protein kinase family. STE20 subfamily.</text>
</comment>
<feature type="chain" id="PRO_0000247764" description="Serine/threonine-protein kinase 3">
    <location>
        <begin position="1"/>
        <end position="491"/>
    </location>
</feature>
<feature type="chain" id="PRO_0000413717" description="Serine/threonine-protein kinase 3 36kDa subunit">
    <location>
        <begin position="1"/>
        <end position="322"/>
    </location>
</feature>
<feature type="chain" id="PRO_0000413718" description="Serine/threonine-protein kinase 3 20kDa subunit">
    <location>
        <begin position="323"/>
        <end position="491"/>
    </location>
</feature>
<feature type="domain" description="Protein kinase" evidence="6">
    <location>
        <begin position="27"/>
        <end position="278"/>
    </location>
</feature>
<feature type="domain" description="SARAH" evidence="7">
    <location>
        <begin position="437"/>
        <end position="484"/>
    </location>
</feature>
<feature type="region of interest" description="Disordered" evidence="8">
    <location>
        <begin position="301"/>
        <end position="343"/>
    </location>
</feature>
<feature type="region of interest" description="Disordered" evidence="8">
    <location>
        <begin position="370"/>
        <end position="392"/>
    </location>
</feature>
<feature type="coiled-coil region" evidence="5">
    <location>
        <begin position="291"/>
        <end position="324"/>
    </location>
</feature>
<feature type="compositionally biased region" description="Acidic residues" evidence="8">
    <location>
        <begin position="309"/>
        <end position="321"/>
    </location>
</feature>
<feature type="compositionally biased region" description="Polar residues" evidence="8">
    <location>
        <begin position="326"/>
        <end position="343"/>
    </location>
</feature>
<feature type="compositionally biased region" description="Polar residues" evidence="8">
    <location>
        <begin position="381"/>
        <end position="390"/>
    </location>
</feature>
<feature type="active site" description="Proton acceptor" evidence="6">
    <location>
        <position position="146"/>
    </location>
</feature>
<feature type="binding site" evidence="6">
    <location>
        <begin position="33"/>
        <end position="41"/>
    </location>
    <ligand>
        <name>ATP</name>
        <dbReference type="ChEBI" id="CHEBI:30616"/>
    </ligand>
</feature>
<feature type="binding site" evidence="6">
    <location>
        <position position="56"/>
    </location>
    <ligand>
        <name>ATP</name>
        <dbReference type="ChEBI" id="CHEBI:30616"/>
    </ligand>
</feature>
<feature type="binding site" evidence="3">
    <location>
        <position position="151"/>
    </location>
    <ligand>
        <name>Mg(2+)</name>
        <dbReference type="ChEBI" id="CHEBI:18420"/>
    </ligand>
</feature>
<feature type="binding site" evidence="3">
    <location>
        <position position="164"/>
    </location>
    <ligand>
        <name>Mg(2+)</name>
        <dbReference type="ChEBI" id="CHEBI:18420"/>
    </ligand>
</feature>
<feature type="site" description="Cleavage; by caspase-3" evidence="1">
    <location>
        <begin position="322"/>
        <end position="323"/>
    </location>
</feature>
<feature type="modified residue" description="N-acetylmethionine" evidence="3">
    <location>
        <position position="1"/>
    </location>
</feature>
<feature type="modified residue" description="Phosphoserine" evidence="3">
    <location>
        <position position="15"/>
    </location>
</feature>
<feature type="modified residue" description="Phosphothreonine; by PKB/AKT1" evidence="3">
    <location>
        <position position="117"/>
    </location>
</feature>
<feature type="modified residue" description="Phosphothreonine; by autocatalysis" evidence="9">
    <location>
        <position position="180"/>
    </location>
</feature>
<feature type="modified residue" description="Phosphoserine" evidence="12">
    <location>
        <position position="316"/>
    </location>
</feature>
<feature type="modified residue" description="Phosphothreonine" evidence="3">
    <location>
        <position position="336"/>
    </location>
</feature>
<feature type="modified residue" description="Phosphothreonine" evidence="3">
    <location>
        <position position="378"/>
    </location>
</feature>
<feature type="modified residue" description="Phosphothreonine; by PKB/AKT1" evidence="3">
    <location>
        <position position="384"/>
    </location>
</feature>
<feature type="modified residue" description="Phosphoserine" evidence="3">
    <location>
        <position position="385"/>
    </location>
</feature>
<feature type="modified residue" description="Phosphoserine" evidence="3">
    <location>
        <position position="444"/>
    </location>
</feature>
<gene>
    <name type="primary">Stk3</name>
    <name type="synonym">Mst2</name>
</gene>
<dbReference type="EC" id="2.7.11.1"/>
<dbReference type="EMBL" id="AJ001529">
    <property type="protein sequence ID" value="CAA04814.1"/>
    <property type="molecule type" value="mRNA"/>
</dbReference>
<dbReference type="RefSeq" id="NP_113923.1">
    <property type="nucleotide sequence ID" value="NM_031735.1"/>
</dbReference>
<dbReference type="SMR" id="O54748"/>
<dbReference type="FunCoup" id="O54748">
    <property type="interactions" value="2361"/>
</dbReference>
<dbReference type="IntAct" id="O54748">
    <property type="interactions" value="1"/>
</dbReference>
<dbReference type="MINT" id="O54748"/>
<dbReference type="STRING" id="10116.ENSRNOP00000062778"/>
<dbReference type="ChEMBL" id="CHEMBL5169099"/>
<dbReference type="iPTMnet" id="O54748"/>
<dbReference type="PhosphoSitePlus" id="O54748"/>
<dbReference type="PaxDb" id="10116-ENSRNOP00000062778"/>
<dbReference type="GeneID" id="65189"/>
<dbReference type="KEGG" id="rno:65189"/>
<dbReference type="UCSC" id="RGD:68412">
    <property type="organism name" value="rat"/>
</dbReference>
<dbReference type="AGR" id="RGD:68412"/>
<dbReference type="CTD" id="6788"/>
<dbReference type="RGD" id="68412">
    <property type="gene designation" value="Stk3"/>
</dbReference>
<dbReference type="eggNOG" id="KOG0574">
    <property type="taxonomic scope" value="Eukaryota"/>
</dbReference>
<dbReference type="InParanoid" id="O54748"/>
<dbReference type="PhylomeDB" id="O54748"/>
<dbReference type="Reactome" id="R-RNO-2028269">
    <property type="pathway name" value="Signaling by Hippo"/>
</dbReference>
<dbReference type="PRO" id="PR:O54748"/>
<dbReference type="Proteomes" id="UP000002494">
    <property type="component" value="Unplaced"/>
</dbReference>
<dbReference type="GO" id="GO:0005813">
    <property type="term" value="C:centrosome"/>
    <property type="evidence" value="ECO:0000266"/>
    <property type="project" value="RGD"/>
</dbReference>
<dbReference type="GO" id="GO:0005737">
    <property type="term" value="C:cytoplasm"/>
    <property type="evidence" value="ECO:0000250"/>
    <property type="project" value="UniProtKB"/>
</dbReference>
<dbReference type="GO" id="GO:0005634">
    <property type="term" value="C:nucleus"/>
    <property type="evidence" value="ECO:0000250"/>
    <property type="project" value="UniProtKB"/>
</dbReference>
<dbReference type="GO" id="GO:0032991">
    <property type="term" value="C:protein-containing complex"/>
    <property type="evidence" value="ECO:0000266"/>
    <property type="project" value="RGD"/>
</dbReference>
<dbReference type="GO" id="GO:0005524">
    <property type="term" value="F:ATP binding"/>
    <property type="evidence" value="ECO:0000266"/>
    <property type="project" value="RGD"/>
</dbReference>
<dbReference type="GO" id="GO:0042802">
    <property type="term" value="F:identical protein binding"/>
    <property type="evidence" value="ECO:0000266"/>
    <property type="project" value="RGD"/>
</dbReference>
<dbReference type="GO" id="GO:0000287">
    <property type="term" value="F:magnesium ion binding"/>
    <property type="evidence" value="ECO:0000266"/>
    <property type="project" value="RGD"/>
</dbReference>
<dbReference type="GO" id="GO:0004672">
    <property type="term" value="F:protein kinase activity"/>
    <property type="evidence" value="ECO:0000250"/>
    <property type="project" value="UniProtKB"/>
</dbReference>
<dbReference type="GO" id="GO:0106310">
    <property type="term" value="F:protein serine kinase activity"/>
    <property type="evidence" value="ECO:0007669"/>
    <property type="project" value="RHEA"/>
</dbReference>
<dbReference type="GO" id="GO:0004674">
    <property type="term" value="F:protein serine/threonine kinase activity"/>
    <property type="evidence" value="ECO:0000250"/>
    <property type="project" value="UniProtKB"/>
</dbReference>
<dbReference type="GO" id="GO:0140537">
    <property type="term" value="F:transcription regulator activator activity"/>
    <property type="evidence" value="ECO:0000266"/>
    <property type="project" value="RGD"/>
</dbReference>
<dbReference type="GO" id="GO:0006915">
    <property type="term" value="P:apoptotic process"/>
    <property type="evidence" value="ECO:0000266"/>
    <property type="project" value="RGD"/>
</dbReference>
<dbReference type="GO" id="GO:0060070">
    <property type="term" value="P:canonical Wnt signaling pathway"/>
    <property type="evidence" value="ECO:0000266"/>
    <property type="project" value="RGD"/>
</dbReference>
<dbReference type="GO" id="GO:0060706">
    <property type="term" value="P:cell differentiation involved in embryonic placenta development"/>
    <property type="evidence" value="ECO:0000266"/>
    <property type="project" value="RGD"/>
</dbReference>
<dbReference type="GO" id="GO:0008283">
    <property type="term" value="P:cell population proliferation"/>
    <property type="evidence" value="ECO:0000266"/>
    <property type="project" value="RGD"/>
</dbReference>
<dbReference type="GO" id="GO:0007417">
    <property type="term" value="P:central nervous system development"/>
    <property type="evidence" value="ECO:0000266"/>
    <property type="project" value="RGD"/>
</dbReference>
<dbReference type="GO" id="GO:0003157">
    <property type="term" value="P:endocardium development"/>
    <property type="evidence" value="ECO:0000266"/>
    <property type="project" value="RGD"/>
</dbReference>
<dbReference type="GO" id="GO:0050673">
    <property type="term" value="P:epithelial cell proliferation"/>
    <property type="evidence" value="ECO:0000266"/>
    <property type="project" value="RGD"/>
</dbReference>
<dbReference type="GO" id="GO:0008625">
    <property type="term" value="P:extrinsic apoptotic signaling pathway via death domain receptors"/>
    <property type="evidence" value="ECO:0000266"/>
    <property type="project" value="RGD"/>
</dbReference>
<dbReference type="GO" id="GO:0097284">
    <property type="term" value="P:hepatocyte apoptotic process"/>
    <property type="evidence" value="ECO:0000266"/>
    <property type="project" value="RGD"/>
</dbReference>
<dbReference type="GO" id="GO:0035329">
    <property type="term" value="P:hippo signaling"/>
    <property type="evidence" value="ECO:0000250"/>
    <property type="project" value="UniProtKB"/>
</dbReference>
<dbReference type="GO" id="GO:0035556">
    <property type="term" value="P:intracellular signal transduction"/>
    <property type="evidence" value="ECO:0000266"/>
    <property type="project" value="RGD"/>
</dbReference>
<dbReference type="GO" id="GO:0007254">
    <property type="term" value="P:JNK cascade"/>
    <property type="evidence" value="ECO:0000266"/>
    <property type="project" value="RGD"/>
</dbReference>
<dbReference type="GO" id="GO:0090090">
    <property type="term" value="P:negative regulation of canonical Wnt signaling pathway"/>
    <property type="evidence" value="ECO:0000266"/>
    <property type="project" value="RGD"/>
</dbReference>
<dbReference type="GO" id="GO:0008285">
    <property type="term" value="P:negative regulation of cell population proliferation"/>
    <property type="evidence" value="ECO:0000266"/>
    <property type="project" value="RGD"/>
</dbReference>
<dbReference type="GO" id="GO:0050680">
    <property type="term" value="P:negative regulation of epithelial cell proliferation"/>
    <property type="evidence" value="ECO:0000266"/>
    <property type="project" value="RGD"/>
</dbReference>
<dbReference type="GO" id="GO:0046621">
    <property type="term" value="P:negative regulation of organ growth"/>
    <property type="evidence" value="ECO:0000266"/>
    <property type="project" value="RGD"/>
</dbReference>
<dbReference type="GO" id="GO:0001841">
    <property type="term" value="P:neural tube formation"/>
    <property type="evidence" value="ECO:0000266"/>
    <property type="project" value="RGD"/>
</dbReference>
<dbReference type="GO" id="GO:0035265">
    <property type="term" value="P:organ growth"/>
    <property type="evidence" value="ECO:0000266"/>
    <property type="project" value="RGD"/>
</dbReference>
<dbReference type="GO" id="GO:0043491">
    <property type="term" value="P:phosphatidylinositol 3-kinase/protein kinase B signal transduction"/>
    <property type="evidence" value="ECO:0000266"/>
    <property type="project" value="RGD"/>
</dbReference>
<dbReference type="GO" id="GO:0043065">
    <property type="term" value="P:positive regulation of apoptotic process"/>
    <property type="evidence" value="ECO:0000266"/>
    <property type="project" value="RGD"/>
</dbReference>
<dbReference type="GO" id="GO:1902043">
    <property type="term" value="P:positive regulation of extrinsic apoptotic signaling pathway via death domain receptors"/>
    <property type="evidence" value="ECO:0000266"/>
    <property type="project" value="RGD"/>
</dbReference>
<dbReference type="GO" id="GO:0045600">
    <property type="term" value="P:positive regulation of fat cell differentiation"/>
    <property type="evidence" value="ECO:0000266"/>
    <property type="project" value="RGD"/>
</dbReference>
<dbReference type="GO" id="GO:0035332">
    <property type="term" value="P:positive regulation of hippo signaling"/>
    <property type="evidence" value="ECO:0000266"/>
    <property type="project" value="RGD"/>
</dbReference>
<dbReference type="GO" id="GO:0046330">
    <property type="term" value="P:positive regulation of JNK cascade"/>
    <property type="evidence" value="ECO:0000266"/>
    <property type="project" value="RGD"/>
</dbReference>
<dbReference type="GO" id="GO:0051897">
    <property type="term" value="P:positive regulation of phosphatidylinositol 3-kinase/protein kinase B signal transduction"/>
    <property type="evidence" value="ECO:0000266"/>
    <property type="project" value="RGD"/>
</dbReference>
<dbReference type="GO" id="GO:0060215">
    <property type="term" value="P:primitive hemopoiesis"/>
    <property type="evidence" value="ECO:0000266"/>
    <property type="project" value="RGD"/>
</dbReference>
<dbReference type="GO" id="GO:0006606">
    <property type="term" value="P:protein import into nucleus"/>
    <property type="evidence" value="ECO:0000266"/>
    <property type="project" value="RGD"/>
</dbReference>
<dbReference type="GO" id="GO:0071539">
    <property type="term" value="P:protein localization to centrosome"/>
    <property type="evidence" value="ECO:0000266"/>
    <property type="project" value="RGD"/>
</dbReference>
<dbReference type="GO" id="GO:0050821">
    <property type="term" value="P:protein stabilization"/>
    <property type="evidence" value="ECO:0000266"/>
    <property type="project" value="RGD"/>
</dbReference>
<dbReference type="GO" id="GO:0051262">
    <property type="term" value="P:protein tetramerization"/>
    <property type="evidence" value="ECO:0007669"/>
    <property type="project" value="InterPro"/>
</dbReference>
<dbReference type="GO" id="GO:0060800">
    <property type="term" value="P:regulation of cell differentiation involved in embryonic placenta development"/>
    <property type="evidence" value="ECO:0000266"/>
    <property type="project" value="RGD"/>
</dbReference>
<dbReference type="GO" id="GO:0043408">
    <property type="term" value="P:regulation of MAPK cascade"/>
    <property type="evidence" value="ECO:0000318"/>
    <property type="project" value="GO_Central"/>
</dbReference>
<dbReference type="CDD" id="cd21888">
    <property type="entry name" value="SARAH_MST2"/>
    <property type="match status" value="1"/>
</dbReference>
<dbReference type="CDD" id="cd06612">
    <property type="entry name" value="STKc_MST1_2"/>
    <property type="match status" value="1"/>
</dbReference>
<dbReference type="FunFam" id="1.10.287.4270:FF:000001">
    <property type="entry name" value="Serine/threonine-protein kinase 3"/>
    <property type="match status" value="1"/>
</dbReference>
<dbReference type="FunFam" id="1.10.510.10:FF:000075">
    <property type="entry name" value="Serine/threonine-protein kinase 3"/>
    <property type="match status" value="1"/>
</dbReference>
<dbReference type="FunFam" id="3.30.200.20:FF:000410">
    <property type="entry name" value="Serine/threonine-protein kinase 3"/>
    <property type="match status" value="1"/>
</dbReference>
<dbReference type="FunFam" id="4.10.170.10:FF:000002">
    <property type="entry name" value="serine/threonine-protein kinase 3"/>
    <property type="match status" value="1"/>
</dbReference>
<dbReference type="Gene3D" id="1.10.287.4270">
    <property type="match status" value="1"/>
</dbReference>
<dbReference type="Gene3D" id="4.10.170.10">
    <property type="entry name" value="p53-like tetramerisation domain"/>
    <property type="match status" value="1"/>
</dbReference>
<dbReference type="Gene3D" id="1.10.510.10">
    <property type="entry name" value="Transferase(Phosphotransferase) domain 1"/>
    <property type="match status" value="1"/>
</dbReference>
<dbReference type="InterPro" id="IPR011009">
    <property type="entry name" value="Kinase-like_dom_sf"/>
</dbReference>
<dbReference type="InterPro" id="IPR024205">
    <property type="entry name" value="Mst1_2_SARAH_domain"/>
</dbReference>
<dbReference type="InterPro" id="IPR049568">
    <property type="entry name" value="Mst2_SARAH"/>
</dbReference>
<dbReference type="InterPro" id="IPR036674">
    <property type="entry name" value="p53_tetramer_sf"/>
</dbReference>
<dbReference type="InterPro" id="IPR000719">
    <property type="entry name" value="Prot_kinase_dom"/>
</dbReference>
<dbReference type="InterPro" id="IPR017441">
    <property type="entry name" value="Protein_kinase_ATP_BS"/>
</dbReference>
<dbReference type="InterPro" id="IPR011524">
    <property type="entry name" value="SARAH_dom"/>
</dbReference>
<dbReference type="InterPro" id="IPR050629">
    <property type="entry name" value="STE20/SPS1-PAK"/>
</dbReference>
<dbReference type="PANTHER" id="PTHR48012:SF2">
    <property type="entry name" value="STERILE20-LIKE KINASE, ISOFORM B"/>
    <property type="match status" value="1"/>
</dbReference>
<dbReference type="PANTHER" id="PTHR48012">
    <property type="entry name" value="STERILE20-LIKE KINASE, ISOFORM B-RELATED"/>
    <property type="match status" value="1"/>
</dbReference>
<dbReference type="Pfam" id="PF11629">
    <property type="entry name" value="Mst1_SARAH"/>
    <property type="match status" value="1"/>
</dbReference>
<dbReference type="Pfam" id="PF00069">
    <property type="entry name" value="Pkinase"/>
    <property type="match status" value="1"/>
</dbReference>
<dbReference type="SMART" id="SM00220">
    <property type="entry name" value="S_TKc"/>
    <property type="match status" value="1"/>
</dbReference>
<dbReference type="SUPFAM" id="SSF56112">
    <property type="entry name" value="Protein kinase-like (PK-like)"/>
    <property type="match status" value="1"/>
</dbReference>
<dbReference type="PROSITE" id="PS00107">
    <property type="entry name" value="PROTEIN_KINASE_ATP"/>
    <property type="match status" value="1"/>
</dbReference>
<dbReference type="PROSITE" id="PS50011">
    <property type="entry name" value="PROTEIN_KINASE_DOM"/>
    <property type="match status" value="1"/>
</dbReference>
<dbReference type="PROSITE" id="PS50951">
    <property type="entry name" value="SARAH"/>
    <property type="match status" value="1"/>
</dbReference>
<reference key="1">
    <citation type="journal article" date="1998" name="J. Biol. Chem.">
        <title>Identification of the thyroid transcription factor 1 as a target for rat MST2 kinase.</title>
        <authorList>
            <person name="Aurisicchio L."/>
            <person name="Dilauro R."/>
            <person name="Zannini M."/>
        </authorList>
    </citation>
    <scope>NUCLEOTIDE SEQUENCE [MRNA]</scope>
    <scope>FUNCTION</scope>
    <source>
        <tissue>Thyroid</tissue>
    </source>
</reference>
<reference key="2">
    <citation type="journal article" date="2003" name="J. Biol. Chem.">
        <title>Regulation of mammalian STE20-like kinase 2 (MST2) by protein phosphorylation/dephosphorylation and proteolysis.</title>
        <authorList>
            <person name="Deng Y."/>
            <person name="Pang A."/>
            <person name="Wang J.H."/>
        </authorList>
    </citation>
    <scope>ACTIVITY REGULATION</scope>
    <scope>PHOSPHORYLATION AT THR-180</scope>
</reference>
<reference key="3">
    <citation type="journal article" date="2012" name="Nat. Commun.">
        <title>Quantitative maps of protein phosphorylation sites across 14 different rat organs and tissues.</title>
        <authorList>
            <person name="Lundby A."/>
            <person name="Secher A."/>
            <person name="Lage K."/>
            <person name="Nordsborg N.B."/>
            <person name="Dmytriyev A."/>
            <person name="Lundby C."/>
            <person name="Olsen J.V."/>
        </authorList>
    </citation>
    <scope>PHOSPHORYLATION [LARGE SCALE ANALYSIS] AT SER-316</scope>
    <scope>IDENTIFICATION BY MASS SPECTROMETRY [LARGE SCALE ANALYSIS]</scope>
</reference>
<organism>
    <name type="scientific">Rattus norvegicus</name>
    <name type="common">Rat</name>
    <dbReference type="NCBI Taxonomy" id="10116"/>
    <lineage>
        <taxon>Eukaryota</taxon>
        <taxon>Metazoa</taxon>
        <taxon>Chordata</taxon>
        <taxon>Craniata</taxon>
        <taxon>Vertebrata</taxon>
        <taxon>Euteleostomi</taxon>
        <taxon>Mammalia</taxon>
        <taxon>Eutheria</taxon>
        <taxon>Euarchontoglires</taxon>
        <taxon>Glires</taxon>
        <taxon>Rodentia</taxon>
        <taxon>Myomorpha</taxon>
        <taxon>Muroidea</taxon>
        <taxon>Muridae</taxon>
        <taxon>Murinae</taxon>
        <taxon>Rattus</taxon>
    </lineage>
</organism>
<accession>O54748</accession>
<keyword id="KW-0007">Acetylation</keyword>
<keyword id="KW-0053">Apoptosis</keyword>
<keyword id="KW-0067">ATP-binding</keyword>
<keyword id="KW-0175">Coiled coil</keyword>
<keyword id="KW-0963">Cytoplasm</keyword>
<keyword id="KW-0418">Kinase</keyword>
<keyword id="KW-0460">Magnesium</keyword>
<keyword id="KW-0479">Metal-binding</keyword>
<keyword id="KW-0547">Nucleotide-binding</keyword>
<keyword id="KW-0539">Nucleus</keyword>
<keyword id="KW-0597">Phosphoprotein</keyword>
<keyword id="KW-1185">Reference proteome</keyword>
<keyword id="KW-0723">Serine/threonine-protein kinase</keyword>
<keyword id="KW-0808">Transferase</keyword>
<keyword id="KW-0832">Ubl conjugation</keyword>
<proteinExistence type="evidence at protein level"/>
<name>STK3_RAT</name>
<evidence type="ECO:0000250" key="1"/>
<evidence type="ECO:0000250" key="2">
    <source>
        <dbReference type="UniProtKB" id="Q13043"/>
    </source>
</evidence>
<evidence type="ECO:0000250" key="3">
    <source>
        <dbReference type="UniProtKB" id="Q13188"/>
    </source>
</evidence>
<evidence type="ECO:0000250" key="4">
    <source>
        <dbReference type="UniProtKB" id="Q9JI10"/>
    </source>
</evidence>
<evidence type="ECO:0000255" key="5"/>
<evidence type="ECO:0000255" key="6">
    <source>
        <dbReference type="PROSITE-ProRule" id="PRU00159"/>
    </source>
</evidence>
<evidence type="ECO:0000255" key="7">
    <source>
        <dbReference type="PROSITE-ProRule" id="PRU00310"/>
    </source>
</evidence>
<evidence type="ECO:0000256" key="8">
    <source>
        <dbReference type="SAM" id="MobiDB-lite"/>
    </source>
</evidence>
<evidence type="ECO:0000269" key="9">
    <source>
    </source>
</evidence>
<evidence type="ECO:0000269" key="10">
    <source>
    </source>
</evidence>
<evidence type="ECO:0000305" key="11"/>
<evidence type="ECO:0007744" key="12">
    <source>
    </source>
</evidence>
<sequence length="491" mass="56122">MEQPPAPKSKLKKLSEDSLTKQPEEVFDVLEKLGEGSYGSVFKAIHKESGQVVAIKQVPVESDVQEIIKEISIMQQCDSPYVVKYYGSYFKNTDLWIVMEYCGAGSVSDIIRLRNKTLTEDEIATILKSTLKGLEYLHFMRKIHRDIKAGNILLNTEGHAKLADFGVAGQLTDTMAKRNTVIGTPFWMAPEVIQEIGYNCVADIWSLGITSIEMAEGKPPYADIHPMRAIFMIPTNPPPTFRKPELWSDDFTDFVKKCLVKSPEQRATATQLLQHPFIKNAKPVSILRELITEGMEIKAKRHEEQQRELEDEEENSDEDELDSHTMVKTSSEGVGTMRATSTMSEGAQTMIEHNSTMLESDLGTMVINSEDEEEEDGTMKRNATSPQVQRPSFMDYFDKQDFKNKSHENCDQSMREPCPMSNNVFPDNWRVPQDGDFDFLKNLSLEELQMRLKALDPMMEREIEELHQRYSAKRQPILDAMDAKKRRQQNF</sequence>